<dbReference type="EMBL" id="GU726488">
    <property type="protein sequence ID" value="ADR83605.1"/>
    <property type="molecule type" value="mRNA"/>
</dbReference>
<dbReference type="SMR" id="E7CAU3"/>
<dbReference type="GO" id="GO:0005576">
    <property type="term" value="C:extracellular region"/>
    <property type="evidence" value="ECO:0000314"/>
    <property type="project" value="UniProtKB"/>
</dbReference>
<dbReference type="GO" id="GO:0019871">
    <property type="term" value="F:sodium channel inhibitor activity"/>
    <property type="evidence" value="ECO:0007669"/>
    <property type="project" value="InterPro"/>
</dbReference>
<dbReference type="GO" id="GO:0090729">
    <property type="term" value="F:toxin activity"/>
    <property type="evidence" value="ECO:0007669"/>
    <property type="project" value="UniProtKB-KW"/>
</dbReference>
<dbReference type="GO" id="GO:0006952">
    <property type="term" value="P:defense response"/>
    <property type="evidence" value="ECO:0007669"/>
    <property type="project" value="InterPro"/>
</dbReference>
<dbReference type="GO" id="GO:0044741">
    <property type="term" value="P:venom-mediated suppression of sensory perception of pain in another organism"/>
    <property type="evidence" value="ECO:0000314"/>
    <property type="project" value="UniProtKB"/>
</dbReference>
<dbReference type="CDD" id="cd23106">
    <property type="entry name" value="neurotoxins_LC_scorpion"/>
    <property type="match status" value="1"/>
</dbReference>
<dbReference type="FunFam" id="3.30.30.10:FF:000002">
    <property type="entry name" value="Alpha-like toxin BmK-M1"/>
    <property type="match status" value="1"/>
</dbReference>
<dbReference type="Gene3D" id="3.30.30.10">
    <property type="entry name" value="Knottin, scorpion toxin-like"/>
    <property type="match status" value="1"/>
</dbReference>
<dbReference type="InterPro" id="IPR044062">
    <property type="entry name" value="LCN-type_CS_alpha_beta_dom"/>
</dbReference>
<dbReference type="InterPro" id="IPR003614">
    <property type="entry name" value="Scorpion_toxin-like"/>
</dbReference>
<dbReference type="InterPro" id="IPR036574">
    <property type="entry name" value="Scorpion_toxin-like_sf"/>
</dbReference>
<dbReference type="InterPro" id="IPR018218">
    <property type="entry name" value="Scorpion_toxinL"/>
</dbReference>
<dbReference type="InterPro" id="IPR002061">
    <property type="entry name" value="Scorpion_toxinL/defensin"/>
</dbReference>
<dbReference type="Pfam" id="PF00537">
    <property type="entry name" value="Toxin_3"/>
    <property type="match status" value="1"/>
</dbReference>
<dbReference type="PRINTS" id="PR00285">
    <property type="entry name" value="SCORPNTOXIN"/>
</dbReference>
<dbReference type="SMART" id="SM00505">
    <property type="entry name" value="Knot1"/>
    <property type="match status" value="1"/>
</dbReference>
<dbReference type="SUPFAM" id="SSF57095">
    <property type="entry name" value="Scorpion toxin-like"/>
    <property type="match status" value="1"/>
</dbReference>
<dbReference type="PROSITE" id="PS51863">
    <property type="entry name" value="LCN_CSAB"/>
    <property type="match status" value="1"/>
</dbReference>
<evidence type="ECO:0000250" key="1"/>
<evidence type="ECO:0000250" key="2">
    <source>
        <dbReference type="UniProtKB" id="Q9GQW3"/>
    </source>
</evidence>
<evidence type="ECO:0000255" key="3"/>
<evidence type="ECO:0000255" key="4">
    <source>
        <dbReference type="PROSITE-ProRule" id="PRU01210"/>
    </source>
</evidence>
<evidence type="ECO:0000269" key="5">
    <source>
    </source>
</evidence>
<evidence type="ECO:0000303" key="6">
    <source>
    </source>
</evidence>
<evidence type="ECO:0000305" key="7"/>
<evidence type="ECO:0000312" key="8">
    <source>
        <dbReference type="EMBL" id="ADR83605.1"/>
    </source>
</evidence>
<accession>E7CAU3</accession>
<gene>
    <name evidence="8" type="primary">AGP-SYPU1</name>
</gene>
<proteinExistence type="evidence at protein level"/>
<name>SCU1_OLIMR</name>
<keyword id="KW-0903">Direct protein sequencing</keyword>
<keyword id="KW-1015">Disulfide bond</keyword>
<keyword id="KW-0872">Ion channel impairing toxin</keyword>
<keyword id="KW-0528">Neurotoxin</keyword>
<keyword id="KW-0964">Secreted</keyword>
<keyword id="KW-0800">Toxin</keyword>
<keyword id="KW-0738">Voltage-gated sodium channel impairing toxin</keyword>
<feature type="chain" id="PRO_0000413469" description="Neurotoxin BmK AGP-SYPU1" evidence="5">
    <location>
        <begin position="1"/>
        <end position="64"/>
    </location>
</feature>
<feature type="propeptide" id="PRO_0000413470" description="Removed by a carboxypeptidase" evidence="2">
    <location>
        <begin position="65"/>
        <end position="66"/>
    </location>
</feature>
<feature type="domain" description="LCN-type CS-alpha/beta" evidence="4">
    <location>
        <begin position="2"/>
        <end position="64"/>
    </location>
</feature>
<feature type="disulfide bond" evidence="4">
    <location>
        <begin position="12"/>
        <end position="63"/>
    </location>
</feature>
<feature type="disulfide bond" evidence="4">
    <location>
        <begin position="16"/>
        <end position="36"/>
    </location>
</feature>
<feature type="disulfide bond" evidence="4">
    <location>
        <begin position="22"/>
        <end position="46"/>
    </location>
</feature>
<feature type="disulfide bond" evidence="4">
    <location>
        <begin position="26"/>
        <end position="48"/>
    </location>
</feature>
<feature type="non-terminal residue" evidence="8">
    <location>
        <position position="1"/>
    </location>
</feature>
<sequence>GRDAYIAQNYNCVYHCFRDDYCNGLCTENGADSGYCYLAGKYGHACWCINLPDDKPIRIPGKCHRR</sequence>
<organism>
    <name type="scientific">Olivierus martensii</name>
    <name type="common">Manchurian scorpion</name>
    <name type="synonym">Mesobuthus martensii</name>
    <dbReference type="NCBI Taxonomy" id="34649"/>
    <lineage>
        <taxon>Eukaryota</taxon>
        <taxon>Metazoa</taxon>
        <taxon>Ecdysozoa</taxon>
        <taxon>Arthropoda</taxon>
        <taxon>Chelicerata</taxon>
        <taxon>Arachnida</taxon>
        <taxon>Scorpiones</taxon>
        <taxon>Buthida</taxon>
        <taxon>Buthoidea</taxon>
        <taxon>Buthidae</taxon>
        <taxon>Olivierus</taxon>
    </lineage>
</organism>
<protein>
    <recommendedName>
        <fullName evidence="6">Neurotoxin BmK AGP-SYPU1</fullName>
    </recommendedName>
</protein>
<comment type="function">
    <text evidence="1">Alpha toxins bind voltage-independently at site-3 of sodium channels (Nav) and inhibit the inactivation of the activated channels, thereby blocking neuronal transmission (By similarity). This toxin has a strong analgesic effect when administered to mice by intraperitoneal injection.</text>
</comment>
<comment type="subcellular location">
    <subcellularLocation>
        <location evidence="5">Secreted</location>
    </subcellularLocation>
</comment>
<comment type="tissue specificity">
    <text evidence="5">Expressed by the venom gland.</text>
</comment>
<comment type="domain">
    <text evidence="7">Has the structural arrangement of an alpha-helix connected to antiparallel beta-sheets by disulfide bonds (CS-alpha/beta).</text>
</comment>
<comment type="mass spectrometry"/>
<comment type="similarity">
    <text evidence="3">Belongs to the long (4 C-C) scorpion toxin superfamily. Sodium channel inhibitor family. Alpha subfamily.</text>
</comment>
<reference evidence="7 8" key="1">
    <citation type="journal article" date="2011" name="Biomed. Chromatogr.">
        <title>Purification, characterization and functional expression of a new peptide with an analgesic effect from Chinese scorpion Buthus martensii Karsch (BmK AGP-SYPU1).</title>
        <authorList>
            <person name="Wang Y."/>
            <person name="Wang L."/>
            <person name="Cui Y."/>
            <person name="Song Y.B."/>
            <person name="Liu Y.F."/>
            <person name="Zhang R."/>
            <person name="Wu C.F."/>
            <person name="Zhang J.H."/>
        </authorList>
    </citation>
    <scope>NUCLEOTIDE SEQUENCE [MRNA]</scope>
    <scope>PROTEIN SEQUENCE OF 1-20</scope>
    <scope>MASS SPECTROMETRY</scope>
    <source>
        <tissue evidence="5">Venom</tissue>
    </source>
</reference>